<sequence>MLFSACADTNDQSLGPNVLGCRGDFDFTVKFEQLCFSLTPAAIFILASPWRVAHLVRKPTIVGAPLLRLAKLGVLVSYASLELSQLILITVLPFGASGIDIISSALRLAAALCMVGLSYFDHSKSPRPSIFLSAYLFFTLLFDIAQARTYWLASSTRPEIAFTAIFTAALAMKIAMLLLEAQRKTKWVAWDSKDHSPEETSGIYTLGVFSWLNKLFFDGYHKTLGIRDLYPLDQNLAATHLSERFSRHINEAKRKGHEIGLMEALAKTLYVPMILPIPAKLAAIGSFFCQPLFISSLTSRLSQSEPVPANIGYGFIGASICIYSVIAISQSLYWYFQQRLLYMMRACLATAIYTKTTEARAADEDENASLTLMSIDIERIMKGSLYMHELWGNVIEVALSAWLLYNLLGVAFIAPIVVVCICVGGVSFFMRFMGDSQRNWMAGIQKRVGLTSSVIGNMKNIKISGLTSPISRFVEKLRVDELQAGSNFRLLMLTCSVFAYIPLLLSPPITFGVARRSLDATKLFTSLSYLLLMSTPLQNLLETLPQMAAAVACLGRIQKFLQGEGRDDYRIFLAGSRRDPEKPSLDQLDKSPAVAIKDGSFGWKPDKMVLNNLDVEIPRGSLTIVVGPIASGKSSLCKALLGEMPHSQGTVTIATKFSCVGYCDQTPFLSNGSIRDNIIGYSPFDAQRYAEVVDGTMLGIDFETLPEADRTNIGSNGITLSGGQKQRVSLARCLYLQSDLLIMDDVFSGLDADTEDQVFQRVFGANGILKRRQATVVLCTHSVRHIPSATHVIALSTDGTVVEQGTFGDLVANQSYIHSLGVKAPSTSQADSEKIESDDSAIEPQINLIERAPTETPEVGVNDKSRLSGDSAAYIVYMKSMGTMLPIAIFTSGLLYGFFYNFPTIWLTYWSADAVATNPSHSFGYYAAIYAVLEVCAMLSLIWLGVLLYITVLTRSGVSLHHAALRTLIHAPLRFFTTTDQGIITNLFSQDLSLIDNELPSALLNVIYMVFVGIGQAAVIASSSPYLAISYPFLFGMLYVVQKFYLRTSRQLRLLDLEAKSPLYTHFLDTSKGIVTLRAFGFVSEDRAKNAFLLDTSQRPAYLLAMIQQWLHFVLNVVVAIIAVMLTSLAVRLRSNSGFTGASLVTLMSFGEMLSGVVIYYTALETSLGAISRLKAFDKAAKTETKDGEDIVPPEEWPPRGEIILNNVSASYEYELPLFLSIRLTTNELSSNDTQPETPTLALKNLRLRIRPGEKIAICGRTGSGKSSLISLLLKLLDPIDETLDCVNIDNTPLSRIDRVTLRQRIIAIPQDIVFLPDGSTFQENLDPSNVSTAADAQAVLEAVDLWDFVRDKGGLEAGMTVSNLSQGQRQLFSLGRAVLRRRIRARSLGLGGGGSEGGILLLDEVSSSVDRETEKAMQEVIRVEFREYTVVAVSHRLDIIMDYDRVVVMEKGEIVEEGNPARLVEEPGTRFGELWSVGGN</sequence>
<reference key="1">
    <citation type="journal article" date="2020" name="Chem. Commun. (Camb.)">
        <title>Biosynthesis of oxygenated brasilane terpene glycosides involves a promiscuous N-acetylglucosamine transferase.</title>
        <authorList>
            <person name="Feng J."/>
            <person name="Surup F."/>
            <person name="Hauser M."/>
            <person name="Miller A."/>
            <person name="Wennrich J.P."/>
            <person name="Stadler M."/>
            <person name="Cox R.J."/>
            <person name="Kuhnert E."/>
        </authorList>
    </citation>
    <scope>NUCLEOTIDE SEQUENCE [GENOMIC DNA]</scope>
    <scope>FUNCTION</scope>
    <source>
        <strain>DSM 103480 / CBS 140778</strain>
    </source>
</reference>
<feature type="chain" id="PRO_0000453907" description="ABC-type transporter braE">
    <location>
        <begin position="1"/>
        <end position="1481"/>
    </location>
</feature>
<feature type="transmembrane region" description="Helical" evidence="1">
    <location>
        <begin position="27"/>
        <end position="47"/>
    </location>
</feature>
<feature type="transmembrane region" description="Helical" evidence="1">
    <location>
        <begin position="86"/>
        <end position="106"/>
    </location>
</feature>
<feature type="transmembrane region" description="Helical" evidence="1">
    <location>
        <begin position="130"/>
        <end position="150"/>
    </location>
</feature>
<feature type="transmembrane region" description="Helical" evidence="1">
    <location>
        <begin position="159"/>
        <end position="179"/>
    </location>
</feature>
<feature type="transmembrane region" description="Helical" evidence="1">
    <location>
        <begin position="269"/>
        <end position="289"/>
    </location>
</feature>
<feature type="transmembrane region" description="Helical" evidence="1 3">
    <location>
        <begin position="308"/>
        <end position="328"/>
    </location>
</feature>
<feature type="transmembrane region" description="Helical" evidence="1 3">
    <location>
        <begin position="389"/>
        <end position="409"/>
    </location>
</feature>
<feature type="transmembrane region" description="Helical" evidence="1 3">
    <location>
        <begin position="410"/>
        <end position="430"/>
    </location>
</feature>
<feature type="transmembrane region" description="Helical" evidence="1 3">
    <location>
        <begin position="491"/>
        <end position="511"/>
    </location>
</feature>
<feature type="transmembrane region" description="Helical" evidence="1 3">
    <location>
        <begin position="887"/>
        <end position="907"/>
    </location>
</feature>
<feature type="transmembrane region" description="Helical" evidence="1 3">
    <location>
        <begin position="928"/>
        <end position="948"/>
    </location>
</feature>
<feature type="transmembrane region" description="Helical" evidence="1 3">
    <location>
        <begin position="1001"/>
        <end position="1021"/>
    </location>
</feature>
<feature type="transmembrane region" description="Helical" evidence="1 3">
    <location>
        <begin position="1026"/>
        <end position="1046"/>
    </location>
</feature>
<feature type="transmembrane region" description="Helical" evidence="1 3">
    <location>
        <begin position="1111"/>
        <end position="1131"/>
    </location>
</feature>
<feature type="transmembrane region" description="Helical" evidence="1 3">
    <location>
        <begin position="1144"/>
        <end position="1164"/>
    </location>
</feature>
<feature type="domain" description="ABC transmembrane type-1 1" evidence="3">
    <location>
        <begin position="281"/>
        <end position="549"/>
    </location>
</feature>
<feature type="domain" description="ABC transporter 1" evidence="2">
    <location>
        <begin position="594"/>
        <end position="823"/>
    </location>
</feature>
<feature type="domain" description="ABC transmembrane type-1 2" evidence="3">
    <location>
        <begin position="887"/>
        <end position="1166"/>
    </location>
</feature>
<feature type="domain" description="ABC transporter 2" evidence="2">
    <location>
        <begin position="1224"/>
        <end position="1477"/>
    </location>
</feature>
<feature type="binding site" evidence="2">
    <location>
        <begin position="627"/>
        <end position="634"/>
    </location>
    <ligand>
        <name>ATP</name>
        <dbReference type="ChEBI" id="CHEBI:30616"/>
    </ligand>
</feature>
<feature type="binding site" evidence="2">
    <location>
        <begin position="1260"/>
        <end position="1267"/>
    </location>
    <ligand>
        <name>ATP</name>
        <dbReference type="ChEBI" id="CHEBI:30616"/>
    </ligand>
</feature>
<feature type="glycosylation site" description="N-linked (GlcNAc...) asparagine" evidence="4">
    <location>
        <position position="367"/>
    </location>
</feature>
<feature type="glycosylation site" description="N-linked (GlcNAc...) asparagine" evidence="4">
    <location>
        <position position="671"/>
    </location>
</feature>
<feature type="glycosylation site" description="N-linked (GlcNAc...) asparagine" evidence="4">
    <location>
        <position position="813"/>
    </location>
</feature>
<feature type="glycosylation site" description="N-linked (GlcNAc...) asparagine" evidence="4">
    <location>
        <position position="1207"/>
    </location>
</feature>
<feature type="glycosylation site" description="N-linked (GlcNAc...) asparagine" evidence="4">
    <location>
        <position position="1232"/>
    </location>
</feature>
<feature type="glycosylation site" description="N-linked (GlcNAc...) asparagine" evidence="4">
    <location>
        <position position="1330"/>
    </location>
</feature>
<feature type="glycosylation site" description="N-linked (GlcNAc...) asparagine" evidence="4">
    <location>
        <position position="1364"/>
    </location>
</feature>
<gene>
    <name evidence="6" type="primary">braE</name>
</gene>
<keyword id="KW-0067">ATP-binding</keyword>
<keyword id="KW-0325">Glycoprotein</keyword>
<keyword id="KW-0472">Membrane</keyword>
<keyword id="KW-0547">Nucleotide-binding</keyword>
<keyword id="KW-0677">Repeat</keyword>
<keyword id="KW-0812">Transmembrane</keyword>
<keyword id="KW-1133">Transmembrane helix</keyword>
<keyword id="KW-0813">Transport</keyword>
<organism>
    <name type="scientific">Annulohypoxylon truncatum</name>
    <name type="common">Hypoxylon truncatum</name>
    <dbReference type="NCBI Taxonomy" id="327061"/>
    <lineage>
        <taxon>Eukaryota</taxon>
        <taxon>Fungi</taxon>
        <taxon>Dikarya</taxon>
        <taxon>Ascomycota</taxon>
        <taxon>Pezizomycotina</taxon>
        <taxon>Sordariomycetes</taxon>
        <taxon>Xylariomycetidae</taxon>
        <taxon>Xylariales</taxon>
        <taxon>Hypoxylaceae</taxon>
        <taxon>Annulohypoxylon</taxon>
    </lineage>
</organism>
<proteinExistence type="inferred from homology"/>
<evidence type="ECO:0000255" key="1"/>
<evidence type="ECO:0000255" key="2">
    <source>
        <dbReference type="PROSITE-ProRule" id="PRU00434"/>
    </source>
</evidence>
<evidence type="ECO:0000255" key="3">
    <source>
        <dbReference type="PROSITE-ProRule" id="PRU00441"/>
    </source>
</evidence>
<evidence type="ECO:0000255" key="4">
    <source>
        <dbReference type="PROSITE-ProRule" id="PRU00498"/>
    </source>
</evidence>
<evidence type="ECO:0000269" key="5">
    <source>
    </source>
</evidence>
<evidence type="ECO:0000303" key="6">
    <source>
    </source>
</evidence>
<evidence type="ECO:0000305" key="7"/>
<protein>
    <recommendedName>
        <fullName evidence="6">ABC-type transporter braE</fullName>
    </recommendedName>
    <alternativeName>
        <fullName evidence="6">Brasilane terpene glycosides biosynthesis cluster protein E</fullName>
    </alternativeName>
</protein>
<comment type="function">
    <text evidence="5">ABC-type transporter; part of the gene cluster that mediates the biosynthesis of the brasilane terpene glycosides brasilane D and E.</text>
</comment>
<comment type="subcellular location">
    <subcellularLocation>
        <location evidence="1">Membrane</location>
        <topology evidence="1">Multi-pass membrane protein</topology>
    </subcellularLocation>
</comment>
<comment type="similarity">
    <text evidence="7">Belongs to the ABC transporter superfamily. ABCC family. Conjugate transporter (TC 3.A.1.208) subfamily.</text>
</comment>
<dbReference type="EMBL" id="MT383109">
    <property type="protein sequence ID" value="QOE88887.1"/>
    <property type="molecule type" value="Genomic_DNA"/>
</dbReference>
<dbReference type="SMR" id="P9WER4"/>
<dbReference type="GlyCosmos" id="P9WER4">
    <property type="glycosylation" value="7 sites, No reported glycans"/>
</dbReference>
<dbReference type="GO" id="GO:0016020">
    <property type="term" value="C:membrane"/>
    <property type="evidence" value="ECO:0007669"/>
    <property type="project" value="UniProtKB-SubCell"/>
</dbReference>
<dbReference type="GO" id="GO:0140359">
    <property type="term" value="F:ABC-type transporter activity"/>
    <property type="evidence" value="ECO:0007669"/>
    <property type="project" value="InterPro"/>
</dbReference>
<dbReference type="GO" id="GO:0005524">
    <property type="term" value="F:ATP binding"/>
    <property type="evidence" value="ECO:0007669"/>
    <property type="project" value="UniProtKB-KW"/>
</dbReference>
<dbReference type="GO" id="GO:0016887">
    <property type="term" value="F:ATP hydrolysis activity"/>
    <property type="evidence" value="ECO:0007669"/>
    <property type="project" value="InterPro"/>
</dbReference>
<dbReference type="CDD" id="cd18579">
    <property type="entry name" value="ABC_6TM_ABCC_D1"/>
    <property type="match status" value="1"/>
</dbReference>
<dbReference type="CDD" id="cd18580">
    <property type="entry name" value="ABC_6TM_ABCC_D2"/>
    <property type="match status" value="1"/>
</dbReference>
<dbReference type="CDD" id="cd03250">
    <property type="entry name" value="ABCC_MRP_domain1"/>
    <property type="match status" value="1"/>
</dbReference>
<dbReference type="FunFam" id="1.20.1560.10:FF:000055">
    <property type="entry name" value="ABC multidrug transporter (Eurofung)"/>
    <property type="match status" value="1"/>
</dbReference>
<dbReference type="FunFam" id="1.20.1560.10:FF:000066">
    <property type="entry name" value="ABC multidrug transporter (Eurofung)"/>
    <property type="match status" value="1"/>
</dbReference>
<dbReference type="FunFam" id="3.40.50.300:FF:001854">
    <property type="entry name" value="ABC multidrug transporter (Eurofung)"/>
    <property type="match status" value="1"/>
</dbReference>
<dbReference type="Gene3D" id="1.20.1560.10">
    <property type="entry name" value="ABC transporter type 1, transmembrane domain"/>
    <property type="match status" value="2"/>
</dbReference>
<dbReference type="Gene3D" id="3.40.50.300">
    <property type="entry name" value="P-loop containing nucleotide triphosphate hydrolases"/>
    <property type="match status" value="2"/>
</dbReference>
<dbReference type="InterPro" id="IPR003593">
    <property type="entry name" value="AAA+_ATPase"/>
</dbReference>
<dbReference type="InterPro" id="IPR011527">
    <property type="entry name" value="ABC1_TM_dom"/>
</dbReference>
<dbReference type="InterPro" id="IPR036640">
    <property type="entry name" value="ABC1_TM_sf"/>
</dbReference>
<dbReference type="InterPro" id="IPR003439">
    <property type="entry name" value="ABC_transporter-like_ATP-bd"/>
</dbReference>
<dbReference type="InterPro" id="IPR017871">
    <property type="entry name" value="ABC_transporter-like_CS"/>
</dbReference>
<dbReference type="InterPro" id="IPR050173">
    <property type="entry name" value="ABC_transporter_C-like"/>
</dbReference>
<dbReference type="InterPro" id="IPR044746">
    <property type="entry name" value="ABCC_6TM_D1"/>
</dbReference>
<dbReference type="InterPro" id="IPR044726">
    <property type="entry name" value="ABCC_6TM_D2"/>
</dbReference>
<dbReference type="InterPro" id="IPR027417">
    <property type="entry name" value="P-loop_NTPase"/>
</dbReference>
<dbReference type="InterPro" id="IPR056227">
    <property type="entry name" value="TMD0_ABC"/>
</dbReference>
<dbReference type="PANTHER" id="PTHR24223:SF345">
    <property type="entry name" value="ABC MULTIDRUG TRANSPORTER (EUROFUNG)"/>
    <property type="match status" value="1"/>
</dbReference>
<dbReference type="PANTHER" id="PTHR24223">
    <property type="entry name" value="ATP-BINDING CASSETTE SUB-FAMILY C"/>
    <property type="match status" value="1"/>
</dbReference>
<dbReference type="Pfam" id="PF00664">
    <property type="entry name" value="ABC_membrane"/>
    <property type="match status" value="1"/>
</dbReference>
<dbReference type="Pfam" id="PF00005">
    <property type="entry name" value="ABC_tran"/>
    <property type="match status" value="2"/>
</dbReference>
<dbReference type="Pfam" id="PF24357">
    <property type="entry name" value="TMD0_ABC"/>
    <property type="match status" value="1"/>
</dbReference>
<dbReference type="SMART" id="SM00382">
    <property type="entry name" value="AAA"/>
    <property type="match status" value="2"/>
</dbReference>
<dbReference type="SUPFAM" id="SSF90123">
    <property type="entry name" value="ABC transporter transmembrane region"/>
    <property type="match status" value="2"/>
</dbReference>
<dbReference type="SUPFAM" id="SSF52540">
    <property type="entry name" value="P-loop containing nucleoside triphosphate hydrolases"/>
    <property type="match status" value="2"/>
</dbReference>
<dbReference type="PROSITE" id="PS50929">
    <property type="entry name" value="ABC_TM1F"/>
    <property type="match status" value="2"/>
</dbReference>
<dbReference type="PROSITE" id="PS00211">
    <property type="entry name" value="ABC_TRANSPORTER_1"/>
    <property type="match status" value="2"/>
</dbReference>
<dbReference type="PROSITE" id="PS50893">
    <property type="entry name" value="ABC_TRANSPORTER_2"/>
    <property type="match status" value="2"/>
</dbReference>
<name>BRAE_ANNTR</name>
<accession>P9WER4</accession>
<accession>A0A866WM10</accession>